<evidence type="ECO:0000255" key="1">
    <source>
        <dbReference type="HAMAP-Rule" id="MF_00158"/>
    </source>
</evidence>
<feature type="chain" id="PRO_1000097117" description="Pantothenate synthetase">
    <location>
        <begin position="1"/>
        <end position="279"/>
    </location>
</feature>
<feature type="active site" description="Proton donor" evidence="1">
    <location>
        <position position="38"/>
    </location>
</feature>
<feature type="binding site" evidence="1">
    <location>
        <begin position="31"/>
        <end position="38"/>
    </location>
    <ligand>
        <name>ATP</name>
        <dbReference type="ChEBI" id="CHEBI:30616"/>
    </ligand>
</feature>
<feature type="binding site" evidence="1">
    <location>
        <position position="62"/>
    </location>
    <ligand>
        <name>(R)-pantoate</name>
        <dbReference type="ChEBI" id="CHEBI:15980"/>
    </ligand>
</feature>
<feature type="binding site" evidence="1">
    <location>
        <position position="62"/>
    </location>
    <ligand>
        <name>beta-alanine</name>
        <dbReference type="ChEBI" id="CHEBI:57966"/>
    </ligand>
</feature>
<feature type="binding site" evidence="1">
    <location>
        <begin position="150"/>
        <end position="153"/>
    </location>
    <ligand>
        <name>ATP</name>
        <dbReference type="ChEBI" id="CHEBI:30616"/>
    </ligand>
</feature>
<feature type="binding site" evidence="1">
    <location>
        <position position="156"/>
    </location>
    <ligand>
        <name>(R)-pantoate</name>
        <dbReference type="ChEBI" id="CHEBI:15980"/>
    </ligand>
</feature>
<feature type="binding site" evidence="1">
    <location>
        <position position="179"/>
    </location>
    <ligand>
        <name>ATP</name>
        <dbReference type="ChEBI" id="CHEBI:30616"/>
    </ligand>
</feature>
<feature type="binding site" evidence="1">
    <location>
        <begin position="187"/>
        <end position="190"/>
    </location>
    <ligand>
        <name>ATP</name>
        <dbReference type="ChEBI" id="CHEBI:30616"/>
    </ligand>
</feature>
<organism>
    <name type="scientific">Stenotrophomonas maltophilia (strain R551-3)</name>
    <dbReference type="NCBI Taxonomy" id="391008"/>
    <lineage>
        <taxon>Bacteria</taxon>
        <taxon>Pseudomonadati</taxon>
        <taxon>Pseudomonadota</taxon>
        <taxon>Gammaproteobacteria</taxon>
        <taxon>Lysobacterales</taxon>
        <taxon>Lysobacteraceae</taxon>
        <taxon>Stenotrophomonas</taxon>
        <taxon>Stenotrophomonas maltophilia group</taxon>
    </lineage>
</organism>
<name>PANC_STRM5</name>
<reference key="1">
    <citation type="submission" date="2008-06" db="EMBL/GenBank/DDBJ databases">
        <title>Complete sequence of Stenotrophomonas maltophilia R551-3.</title>
        <authorList>
            <consortium name="US DOE Joint Genome Institute"/>
            <person name="Lucas S."/>
            <person name="Copeland A."/>
            <person name="Lapidus A."/>
            <person name="Glavina del Rio T."/>
            <person name="Dalin E."/>
            <person name="Tice H."/>
            <person name="Pitluck S."/>
            <person name="Chain P."/>
            <person name="Malfatti S."/>
            <person name="Shin M."/>
            <person name="Vergez L."/>
            <person name="Lang D."/>
            <person name="Schmutz J."/>
            <person name="Larimer F."/>
            <person name="Land M."/>
            <person name="Hauser L."/>
            <person name="Kyrpides N."/>
            <person name="Mikhailova N."/>
            <person name="Taghavi S."/>
            <person name="Monchy S."/>
            <person name="Newman L."/>
            <person name="Vangronsveld J."/>
            <person name="van der Lelie D."/>
            <person name="Richardson P."/>
        </authorList>
    </citation>
    <scope>NUCLEOTIDE SEQUENCE [LARGE SCALE GENOMIC DNA]</scope>
    <source>
        <strain>R551-3</strain>
    </source>
</reference>
<comment type="function">
    <text evidence="1">Catalyzes the condensation of pantoate with beta-alanine in an ATP-dependent reaction via a pantoyl-adenylate intermediate.</text>
</comment>
<comment type="catalytic activity">
    <reaction evidence="1">
        <text>(R)-pantoate + beta-alanine + ATP = (R)-pantothenate + AMP + diphosphate + H(+)</text>
        <dbReference type="Rhea" id="RHEA:10912"/>
        <dbReference type="ChEBI" id="CHEBI:15378"/>
        <dbReference type="ChEBI" id="CHEBI:15980"/>
        <dbReference type="ChEBI" id="CHEBI:29032"/>
        <dbReference type="ChEBI" id="CHEBI:30616"/>
        <dbReference type="ChEBI" id="CHEBI:33019"/>
        <dbReference type="ChEBI" id="CHEBI:57966"/>
        <dbReference type="ChEBI" id="CHEBI:456215"/>
        <dbReference type="EC" id="6.3.2.1"/>
    </reaction>
</comment>
<comment type="pathway">
    <text evidence="1">Cofactor biosynthesis; (R)-pantothenate biosynthesis; (R)-pantothenate from (R)-pantoate and beta-alanine: step 1/1.</text>
</comment>
<comment type="subunit">
    <text evidence="1">Homodimer.</text>
</comment>
<comment type="subcellular location">
    <subcellularLocation>
        <location evidence="1">Cytoplasm</location>
    </subcellularLocation>
</comment>
<comment type="miscellaneous">
    <text evidence="1">The reaction proceeds by a bi uni uni bi ping pong mechanism.</text>
</comment>
<comment type="similarity">
    <text evidence="1">Belongs to the pantothenate synthetase family.</text>
</comment>
<keyword id="KW-0067">ATP-binding</keyword>
<keyword id="KW-0963">Cytoplasm</keyword>
<keyword id="KW-0436">Ligase</keyword>
<keyword id="KW-0547">Nucleotide-binding</keyword>
<keyword id="KW-0566">Pantothenate biosynthesis</keyword>
<protein>
    <recommendedName>
        <fullName evidence="1">Pantothenate synthetase</fullName>
        <shortName evidence="1">PS</shortName>
        <ecNumber evidence="1">6.3.2.1</ecNumber>
    </recommendedName>
    <alternativeName>
        <fullName evidence="1">Pantoate--beta-alanine ligase</fullName>
    </alternativeName>
    <alternativeName>
        <fullName evidence="1">Pantoate-activating enzyme</fullName>
    </alternativeName>
</protein>
<sequence length="279" mass="30274">MIQTFNELGALRGQIAEWKREGLRVALVPTMGNLHGGHHSLVTLARQYADKVVASIFVNPTQFGPNEDFSRYPRTPEADVAGLEQAGCDAVWLPSVEAMYPLGVDKTTRMHAPGVSEVLEGASRPGHFDGVCTVVARLFLQVQPDAAVFGRKDYQQLAVIKQMVAELSFPIQIVGADIVRDDDGLAKSSRNQYLSAEQRPVATSIHRTLLGMREGYVAGQSRAQIEADATAALQADGFQVDYAVLRTPELAEPTFDGGGRVALIAARLGTTRLIDNLEF</sequence>
<proteinExistence type="inferred from homology"/>
<gene>
    <name evidence="1" type="primary">panC</name>
    <name type="ordered locus">Smal_1518</name>
</gene>
<accession>B4SRY4</accession>
<dbReference type="EC" id="6.3.2.1" evidence="1"/>
<dbReference type="EMBL" id="CP001111">
    <property type="protein sequence ID" value="ACF51223.1"/>
    <property type="molecule type" value="Genomic_DNA"/>
</dbReference>
<dbReference type="RefSeq" id="WP_012510699.1">
    <property type="nucleotide sequence ID" value="NC_011071.1"/>
</dbReference>
<dbReference type="SMR" id="B4SRY4"/>
<dbReference type="STRING" id="391008.Smal_1518"/>
<dbReference type="KEGG" id="smt:Smal_1518"/>
<dbReference type="eggNOG" id="COG0414">
    <property type="taxonomic scope" value="Bacteria"/>
</dbReference>
<dbReference type="HOGENOM" id="CLU_047148_0_0_6"/>
<dbReference type="OrthoDB" id="9773087at2"/>
<dbReference type="UniPathway" id="UPA00028">
    <property type="reaction ID" value="UER00005"/>
</dbReference>
<dbReference type="Proteomes" id="UP000001867">
    <property type="component" value="Chromosome"/>
</dbReference>
<dbReference type="GO" id="GO:0005829">
    <property type="term" value="C:cytosol"/>
    <property type="evidence" value="ECO:0007669"/>
    <property type="project" value="TreeGrafter"/>
</dbReference>
<dbReference type="GO" id="GO:0005524">
    <property type="term" value="F:ATP binding"/>
    <property type="evidence" value="ECO:0007669"/>
    <property type="project" value="UniProtKB-KW"/>
</dbReference>
<dbReference type="GO" id="GO:0004592">
    <property type="term" value="F:pantoate-beta-alanine ligase activity"/>
    <property type="evidence" value="ECO:0007669"/>
    <property type="project" value="UniProtKB-UniRule"/>
</dbReference>
<dbReference type="GO" id="GO:0015940">
    <property type="term" value="P:pantothenate biosynthetic process"/>
    <property type="evidence" value="ECO:0007669"/>
    <property type="project" value="UniProtKB-UniRule"/>
</dbReference>
<dbReference type="CDD" id="cd00560">
    <property type="entry name" value="PanC"/>
    <property type="match status" value="1"/>
</dbReference>
<dbReference type="FunFam" id="3.40.50.620:FF:000114">
    <property type="entry name" value="Pantothenate synthetase"/>
    <property type="match status" value="1"/>
</dbReference>
<dbReference type="Gene3D" id="3.40.50.620">
    <property type="entry name" value="HUPs"/>
    <property type="match status" value="1"/>
</dbReference>
<dbReference type="Gene3D" id="3.30.1300.10">
    <property type="entry name" value="Pantoate-beta-alanine ligase, C-terminal domain"/>
    <property type="match status" value="1"/>
</dbReference>
<dbReference type="HAMAP" id="MF_00158">
    <property type="entry name" value="PanC"/>
    <property type="match status" value="1"/>
</dbReference>
<dbReference type="InterPro" id="IPR003721">
    <property type="entry name" value="Pantoate_ligase"/>
</dbReference>
<dbReference type="InterPro" id="IPR042176">
    <property type="entry name" value="Pantoate_ligase_C"/>
</dbReference>
<dbReference type="InterPro" id="IPR014729">
    <property type="entry name" value="Rossmann-like_a/b/a_fold"/>
</dbReference>
<dbReference type="NCBIfam" id="TIGR00018">
    <property type="entry name" value="panC"/>
    <property type="match status" value="1"/>
</dbReference>
<dbReference type="PANTHER" id="PTHR21299">
    <property type="entry name" value="CYTIDYLATE KINASE/PANTOATE-BETA-ALANINE LIGASE"/>
    <property type="match status" value="1"/>
</dbReference>
<dbReference type="PANTHER" id="PTHR21299:SF1">
    <property type="entry name" value="PANTOATE--BETA-ALANINE LIGASE"/>
    <property type="match status" value="1"/>
</dbReference>
<dbReference type="Pfam" id="PF02569">
    <property type="entry name" value="Pantoate_ligase"/>
    <property type="match status" value="1"/>
</dbReference>
<dbReference type="SUPFAM" id="SSF52374">
    <property type="entry name" value="Nucleotidylyl transferase"/>
    <property type="match status" value="1"/>
</dbReference>